<sequence>MRKLILGAILAGTSLFALGTQAESLSPADIKIGRQYVELPTHVPVAQPGKIEVVELFWYGCPHCYQFEPSINAWAGKLPEDVSFRRVPALFGGLWNIHGQLFLTLEAMGVEPKVHTAIFDAIHKDGKKLATPEEMAEFLAGHGIDKDAFLKAYGSFNVKSQMEKAKKLAIAYQISGVPVMVVNGKYRFDLGSAGGPENTLQVADYLIEQERSAQ</sequence>
<gene>
    <name type="primary">dsbA</name>
</gene>
<organism>
    <name type="scientific">Azotobacter vinelandii</name>
    <dbReference type="NCBI Taxonomy" id="354"/>
    <lineage>
        <taxon>Bacteria</taxon>
        <taxon>Pseudomonadati</taxon>
        <taxon>Pseudomonadota</taxon>
        <taxon>Gammaproteobacteria</taxon>
        <taxon>Pseudomonadales</taxon>
        <taxon>Pseudomonadaceae</taxon>
        <taxon>Azotobacter</taxon>
    </lineage>
</organism>
<keyword id="KW-1015">Disulfide bond</keyword>
<keyword id="KW-0574">Periplasm</keyword>
<keyword id="KW-0676">Redox-active center</keyword>
<keyword id="KW-0732">Signal</keyword>
<accession>Q44504</accession>
<protein>
    <recommendedName>
        <fullName>Thiol:disulfide interchange protein DsbA</fullName>
    </recommendedName>
</protein>
<proteinExistence type="inferred from homology"/>
<comment type="function">
    <text evidence="1">Involved in disulfide-bond formation. Acts by transferring its disulfide bond to other proteins (By similarity).</text>
</comment>
<comment type="subcellular location">
    <subcellularLocation>
        <location evidence="1">Periplasm</location>
    </subcellularLocation>
</comment>
<comment type="similarity">
    <text evidence="4">Belongs to the thioredoxin family. DsbA subfamily.</text>
</comment>
<evidence type="ECO:0000250" key="1"/>
<evidence type="ECO:0000255" key="2"/>
<evidence type="ECO:0000255" key="3">
    <source>
        <dbReference type="PROSITE-ProRule" id="PRU00691"/>
    </source>
</evidence>
<evidence type="ECO:0000305" key="4"/>
<feature type="signal peptide" evidence="2">
    <location>
        <begin position="1"/>
        <end position="17"/>
    </location>
</feature>
<feature type="chain" id="PRO_0000034247" description="Thiol:disulfide interchange protein DsbA">
    <location>
        <begin position="18"/>
        <end position="214"/>
    </location>
</feature>
<feature type="domain" description="Thioredoxin" evidence="3">
    <location>
        <begin position="18"/>
        <end position="208"/>
    </location>
</feature>
<feature type="disulfide bond" description="Redox-active" evidence="3">
    <location>
        <begin position="61"/>
        <end position="64"/>
    </location>
</feature>
<dbReference type="EMBL" id="L76098">
    <property type="protein sequence ID" value="AAB53016.1"/>
    <property type="molecule type" value="Genomic_DNA"/>
</dbReference>
<dbReference type="RefSeq" id="WP_012698888.1">
    <property type="nucleotide sequence ID" value="NZ_FPKM01000002.1"/>
</dbReference>
<dbReference type="SMR" id="Q44504"/>
<dbReference type="OMA" id="HCYHFEP"/>
<dbReference type="GO" id="GO:0042597">
    <property type="term" value="C:periplasmic space"/>
    <property type="evidence" value="ECO:0007669"/>
    <property type="project" value="UniProtKB-SubCell"/>
</dbReference>
<dbReference type="GO" id="GO:0015036">
    <property type="term" value="F:disulfide oxidoreductase activity"/>
    <property type="evidence" value="ECO:0007669"/>
    <property type="project" value="UniProtKB-ARBA"/>
</dbReference>
<dbReference type="CDD" id="cd03019">
    <property type="entry name" value="DsbA_DsbA"/>
    <property type="match status" value="1"/>
</dbReference>
<dbReference type="Gene3D" id="3.40.30.10">
    <property type="entry name" value="Glutaredoxin"/>
    <property type="match status" value="1"/>
</dbReference>
<dbReference type="InterPro" id="IPR001853">
    <property type="entry name" value="DSBA-like_thioredoxin_dom"/>
</dbReference>
<dbReference type="InterPro" id="IPR023205">
    <property type="entry name" value="DsbA/DsbL"/>
</dbReference>
<dbReference type="InterPro" id="IPR050824">
    <property type="entry name" value="Thiol_disulfide_DsbA"/>
</dbReference>
<dbReference type="InterPro" id="IPR036249">
    <property type="entry name" value="Thioredoxin-like_sf"/>
</dbReference>
<dbReference type="InterPro" id="IPR017937">
    <property type="entry name" value="Thioredoxin_CS"/>
</dbReference>
<dbReference type="InterPro" id="IPR013766">
    <property type="entry name" value="Thioredoxin_domain"/>
</dbReference>
<dbReference type="PANTHER" id="PTHR35891">
    <property type="entry name" value="THIOL:DISULFIDE INTERCHANGE PROTEIN DSBA"/>
    <property type="match status" value="1"/>
</dbReference>
<dbReference type="PANTHER" id="PTHR35891:SF2">
    <property type="entry name" value="THIOL:DISULFIDE INTERCHANGE PROTEIN DSBA"/>
    <property type="match status" value="1"/>
</dbReference>
<dbReference type="Pfam" id="PF01323">
    <property type="entry name" value="DSBA"/>
    <property type="match status" value="1"/>
</dbReference>
<dbReference type="PIRSF" id="PIRSF001488">
    <property type="entry name" value="Tdi_protein"/>
    <property type="match status" value="1"/>
</dbReference>
<dbReference type="SUPFAM" id="SSF52833">
    <property type="entry name" value="Thioredoxin-like"/>
    <property type="match status" value="1"/>
</dbReference>
<dbReference type="PROSITE" id="PS00194">
    <property type="entry name" value="THIOREDOXIN_1"/>
    <property type="match status" value="1"/>
</dbReference>
<dbReference type="PROSITE" id="PS51352">
    <property type="entry name" value="THIOREDOXIN_2"/>
    <property type="match status" value="1"/>
</dbReference>
<reference key="1">
    <citation type="journal article" date="1997" name="Gene">
        <title>Cloning and expression of the gene for a protein disulfide oxidoreductase from Azotobacter vinelandii: complementation of an Escherichia coli dsbA mutant strain.</title>
        <authorList>
            <person name="Ng T.C.N."/>
            <person name="Kwik J.F."/>
            <person name="Maier R.J."/>
        </authorList>
    </citation>
    <scope>NUCLEOTIDE SEQUENCE [GENOMIC DNA]</scope>
    <source>
        <strain>CA</strain>
    </source>
</reference>
<name>DSBA_AZOVI</name>